<proteinExistence type="inferred from homology"/>
<sequence>MTNGYIGSYTKKNGKGIYRFELNENQSRIDLLETGFELEASTYLLRNNEVLYGINKEGEQCGVASLKIDDNGELHLLNKCLSSKAGTGCYVSISEDKRYLFEAVYGAGIIRMYELNTHTGEIIRLIQELAHDFPTGTHERQDHPHAHYINQTPDGKYVAVTDLGADRIVTYKFDDNGFEFYKESLFKDSDGTRHIEFHDNGKFAYVVHELSNTVSVAEYNDGKFEELERHLTIPENFDGDTKLAAVRLSHDQQFLYVSNRGHDSIAIFKVLDNGQHLELVTITESGGQFPRDFNIASSDDLLVCAHEQGDSVVTVFERNKETGKITLCDNTRVASEGVCVIF</sequence>
<comment type="similarity">
    <text evidence="1">Belongs to the cycloisomerase 2 family.</text>
</comment>
<accession>Q6G811</accession>
<name>Y1845_STAAS</name>
<gene>
    <name type="ordered locus">SAS1845</name>
</gene>
<evidence type="ECO:0000305" key="1"/>
<reference key="1">
    <citation type="journal article" date="2004" name="Proc. Natl. Acad. Sci. U.S.A.">
        <title>Complete genomes of two clinical Staphylococcus aureus strains: evidence for the rapid evolution of virulence and drug resistance.</title>
        <authorList>
            <person name="Holden M.T.G."/>
            <person name="Feil E.J."/>
            <person name="Lindsay J.A."/>
            <person name="Peacock S.J."/>
            <person name="Day N.P.J."/>
            <person name="Enright M.C."/>
            <person name="Foster T.J."/>
            <person name="Moore C.E."/>
            <person name="Hurst L."/>
            <person name="Atkin R."/>
            <person name="Barron A."/>
            <person name="Bason N."/>
            <person name="Bentley S.D."/>
            <person name="Chillingworth C."/>
            <person name="Chillingworth T."/>
            <person name="Churcher C."/>
            <person name="Clark L."/>
            <person name="Corton C."/>
            <person name="Cronin A."/>
            <person name="Doggett J."/>
            <person name="Dowd L."/>
            <person name="Feltwell T."/>
            <person name="Hance Z."/>
            <person name="Harris B."/>
            <person name="Hauser H."/>
            <person name="Holroyd S."/>
            <person name="Jagels K."/>
            <person name="James K.D."/>
            <person name="Lennard N."/>
            <person name="Line A."/>
            <person name="Mayes R."/>
            <person name="Moule S."/>
            <person name="Mungall K."/>
            <person name="Ormond D."/>
            <person name="Quail M.A."/>
            <person name="Rabbinowitsch E."/>
            <person name="Rutherford K.M."/>
            <person name="Sanders M."/>
            <person name="Sharp S."/>
            <person name="Simmonds M."/>
            <person name="Stevens K."/>
            <person name="Whitehead S."/>
            <person name="Barrell B.G."/>
            <person name="Spratt B.G."/>
            <person name="Parkhill J."/>
        </authorList>
    </citation>
    <scope>NUCLEOTIDE SEQUENCE [LARGE SCALE GENOMIC DNA]</scope>
    <source>
        <strain>MSSA476</strain>
    </source>
</reference>
<feature type="chain" id="PRO_0000298651" description="Uncharacterized protein SAS1845">
    <location>
        <begin position="1"/>
        <end position="342"/>
    </location>
</feature>
<organism>
    <name type="scientific">Staphylococcus aureus (strain MSSA476)</name>
    <dbReference type="NCBI Taxonomy" id="282459"/>
    <lineage>
        <taxon>Bacteria</taxon>
        <taxon>Bacillati</taxon>
        <taxon>Bacillota</taxon>
        <taxon>Bacilli</taxon>
        <taxon>Bacillales</taxon>
        <taxon>Staphylococcaceae</taxon>
        <taxon>Staphylococcus</taxon>
    </lineage>
</organism>
<protein>
    <recommendedName>
        <fullName>Uncharacterized protein SAS1845</fullName>
    </recommendedName>
</protein>
<dbReference type="EMBL" id="BX571857">
    <property type="protein sequence ID" value="CAG43650.1"/>
    <property type="molecule type" value="Genomic_DNA"/>
</dbReference>
<dbReference type="RefSeq" id="WP_000181316.1">
    <property type="nucleotide sequence ID" value="NC_002953.3"/>
</dbReference>
<dbReference type="SMR" id="Q6G811"/>
<dbReference type="KEGG" id="sas:SAS1845"/>
<dbReference type="HOGENOM" id="CLU_038716_3_0_9"/>
<dbReference type="GO" id="GO:0005829">
    <property type="term" value="C:cytosol"/>
    <property type="evidence" value="ECO:0007669"/>
    <property type="project" value="TreeGrafter"/>
</dbReference>
<dbReference type="GO" id="GO:0017057">
    <property type="term" value="F:6-phosphogluconolactonase activity"/>
    <property type="evidence" value="ECO:0007669"/>
    <property type="project" value="TreeGrafter"/>
</dbReference>
<dbReference type="FunFam" id="2.130.10.10:FF:000822">
    <property type="entry name" value="3-carboxy-cis,cis-muconate lactonizing enzyme"/>
    <property type="match status" value="1"/>
</dbReference>
<dbReference type="Gene3D" id="2.130.10.10">
    <property type="entry name" value="YVTN repeat-like/Quinoprotein amine dehydrogenase"/>
    <property type="match status" value="1"/>
</dbReference>
<dbReference type="InterPro" id="IPR050282">
    <property type="entry name" value="Cycloisomerase_2"/>
</dbReference>
<dbReference type="InterPro" id="IPR019405">
    <property type="entry name" value="Lactonase_7-beta_prop"/>
</dbReference>
<dbReference type="InterPro" id="IPR011045">
    <property type="entry name" value="N2O_reductase_N"/>
</dbReference>
<dbReference type="InterPro" id="IPR015943">
    <property type="entry name" value="WD40/YVTN_repeat-like_dom_sf"/>
</dbReference>
<dbReference type="PANTHER" id="PTHR30344:SF1">
    <property type="entry name" value="6-PHOSPHOGLUCONOLACTONASE"/>
    <property type="match status" value="1"/>
</dbReference>
<dbReference type="PANTHER" id="PTHR30344">
    <property type="entry name" value="6-PHOSPHOGLUCONOLACTONASE-RELATED"/>
    <property type="match status" value="1"/>
</dbReference>
<dbReference type="Pfam" id="PF10282">
    <property type="entry name" value="Lactonase"/>
    <property type="match status" value="1"/>
</dbReference>
<dbReference type="SUPFAM" id="SSF50974">
    <property type="entry name" value="Nitrous oxide reductase, N-terminal domain"/>
    <property type="match status" value="1"/>
</dbReference>